<organism>
    <name type="scientific">Pseudomonas aeruginosa (strain LESB58)</name>
    <dbReference type="NCBI Taxonomy" id="557722"/>
    <lineage>
        <taxon>Bacteria</taxon>
        <taxon>Pseudomonadati</taxon>
        <taxon>Pseudomonadota</taxon>
        <taxon>Gammaproteobacteria</taxon>
        <taxon>Pseudomonadales</taxon>
        <taxon>Pseudomonadaceae</taxon>
        <taxon>Pseudomonas</taxon>
    </lineage>
</organism>
<reference key="1">
    <citation type="journal article" date="2009" name="Genome Res.">
        <title>Newly introduced genomic prophage islands are critical determinants of in vivo competitiveness in the Liverpool epidemic strain of Pseudomonas aeruginosa.</title>
        <authorList>
            <person name="Winstanley C."/>
            <person name="Langille M.G.I."/>
            <person name="Fothergill J.L."/>
            <person name="Kukavica-Ibrulj I."/>
            <person name="Paradis-Bleau C."/>
            <person name="Sanschagrin F."/>
            <person name="Thomson N.R."/>
            <person name="Winsor G.L."/>
            <person name="Quail M.A."/>
            <person name="Lennard N."/>
            <person name="Bignell A."/>
            <person name="Clarke L."/>
            <person name="Seeger K."/>
            <person name="Saunders D."/>
            <person name="Harris D."/>
            <person name="Parkhill J."/>
            <person name="Hancock R.E.W."/>
            <person name="Brinkman F.S.L."/>
            <person name="Levesque R.C."/>
        </authorList>
    </citation>
    <scope>NUCLEOTIDE SEQUENCE [LARGE SCALE GENOMIC DNA]</scope>
    <source>
        <strain>LESB58</strain>
    </source>
</reference>
<sequence length="929" mass="105226">MAVKSLVFRRKFPLLVTGSLLALQPVAALTVQAADQFDCKVSATGGWDCSPLQNANANLPPRPAHTATSVSTAAAGSSVSGSGGETVEAEPTQRLVTESGGRALKSRSADYSHLDWIPREKLTAAQLAEIGPYCGGSYIEPVRPGMDDGAPSDESPTYVSAKASRYEQEKQIATLAGDVVLRQGSMQVEGDEANLHQLENRGELVGNVKLRDKGMLVVGDHAQVQLDNGEAQVDNAEYVIHKAHARGSALYAKRSENAIIMLKDGTYTRCEPSSNAWTLKGNNVKLNPATGFGTATNATLRVKDFPVFYTPYIYFPIDDRRQSGFLPPSFSSTSDTGFTLVTPYYFNLAPNYDATLYPRYMAKRGMMLEGEFRYLTHSSEGTVNAAYLNDKDDHRENFPDYSKDRWLYGLKNTTGLDSRWLAEVDYTRISDPYYFQDLDTDLGVGSTTYVNQRGTLTYRGDTFTGRLNAQAYQLATTTDVTPYERLPQITFDGFLPYEPGGVKFNYSTEFVRFDRDLDDNIYLNDDGSEWGRRPDAYLQGLARSTGDRVHLEPGMSLPMTRSWGYLTPTLKYLYTKYDLDLDSQGKRTLTTYDETFDSSQDRSLPLVKVDSGLYFDRDTTLAGTQFRQTLEPRAMYLYVPYKDQENIPVFDTSEPSFSYDSLWRENRFSGRDRIGDANQLSLGVTTRFIESNGFERASLSAGQIYYFRDRRVQLPGLSEKDLALMRSKNPNLDLKDPDTDSWRSPYALMGQYRFNRDWRVSSDFNWNPNTSRTESGSAMFHYQPEDNPNKVVNAGYRYREDSRRFNSSTGRFEYGRENDIIKQHDFSVIWPLVPQWSVLARWQYDYNKNRTLEAFGGFEYDSCCWKLRLINRYWLDVDDDAFLNQNEKADRGIFLQIVLKGLGGIVGNKTEMFLDKGIQGYRQREDQAM</sequence>
<feature type="signal peptide" evidence="1">
    <location>
        <begin position="1"/>
        <end position="33"/>
    </location>
</feature>
<feature type="chain" id="PRO_1000145515" description="LPS-assembly protein LptD">
    <location>
        <begin position="34"/>
        <end position="929"/>
    </location>
</feature>
<feature type="region of interest" description="Disordered" evidence="2">
    <location>
        <begin position="58"/>
        <end position="101"/>
    </location>
</feature>
<feature type="compositionally biased region" description="Low complexity" evidence="2">
    <location>
        <begin position="66"/>
        <end position="90"/>
    </location>
</feature>
<proteinExistence type="inferred from homology"/>
<name>LPTD_PSEA8</name>
<comment type="function">
    <text evidence="1">Together with LptE, is involved in the assembly of lipopolysaccharide (LPS) at the surface of the outer membrane.</text>
</comment>
<comment type="subunit">
    <text evidence="1">Component of the lipopolysaccharide transport and assembly complex. Interacts with LptE and LptA.</text>
</comment>
<comment type="subcellular location">
    <subcellularLocation>
        <location evidence="1">Cell outer membrane</location>
    </subcellularLocation>
</comment>
<comment type="similarity">
    <text evidence="1">Belongs to the LptD family.</text>
</comment>
<dbReference type="EMBL" id="FM209186">
    <property type="protein sequence ID" value="CAW25319.1"/>
    <property type="molecule type" value="Genomic_DNA"/>
</dbReference>
<dbReference type="RefSeq" id="WP_012613530.1">
    <property type="nucleotide sequence ID" value="NC_011770.1"/>
</dbReference>
<dbReference type="SMR" id="B7V4I1"/>
<dbReference type="KEGG" id="pag:PLES_05921"/>
<dbReference type="HOGENOM" id="CLU_009039_1_0_6"/>
<dbReference type="GO" id="GO:0009279">
    <property type="term" value="C:cell outer membrane"/>
    <property type="evidence" value="ECO:0007669"/>
    <property type="project" value="UniProtKB-SubCell"/>
</dbReference>
<dbReference type="GO" id="GO:1990351">
    <property type="term" value="C:transporter complex"/>
    <property type="evidence" value="ECO:0007669"/>
    <property type="project" value="TreeGrafter"/>
</dbReference>
<dbReference type="GO" id="GO:0043165">
    <property type="term" value="P:Gram-negative-bacterium-type cell outer membrane assembly"/>
    <property type="evidence" value="ECO:0007669"/>
    <property type="project" value="UniProtKB-UniRule"/>
</dbReference>
<dbReference type="GO" id="GO:0015920">
    <property type="term" value="P:lipopolysaccharide transport"/>
    <property type="evidence" value="ECO:0007669"/>
    <property type="project" value="InterPro"/>
</dbReference>
<dbReference type="Gene3D" id="2.60.450.10">
    <property type="entry name" value="Lipopolysaccharide (LPS) transport protein A like domain"/>
    <property type="match status" value="1"/>
</dbReference>
<dbReference type="HAMAP" id="MF_01411">
    <property type="entry name" value="LPS_assembly_LptD"/>
    <property type="match status" value="1"/>
</dbReference>
<dbReference type="InterPro" id="IPR020889">
    <property type="entry name" value="LipoPS_assembly_LptD"/>
</dbReference>
<dbReference type="InterPro" id="IPR050218">
    <property type="entry name" value="LptD"/>
</dbReference>
<dbReference type="InterPro" id="IPR007543">
    <property type="entry name" value="LptD_C"/>
</dbReference>
<dbReference type="InterPro" id="IPR005653">
    <property type="entry name" value="OstA-like_N"/>
</dbReference>
<dbReference type="PANTHER" id="PTHR30189">
    <property type="entry name" value="LPS-ASSEMBLY PROTEIN"/>
    <property type="match status" value="1"/>
</dbReference>
<dbReference type="PANTHER" id="PTHR30189:SF1">
    <property type="entry name" value="LPS-ASSEMBLY PROTEIN LPTD"/>
    <property type="match status" value="1"/>
</dbReference>
<dbReference type="Pfam" id="PF04453">
    <property type="entry name" value="LptD"/>
    <property type="match status" value="1"/>
</dbReference>
<dbReference type="Pfam" id="PF03968">
    <property type="entry name" value="LptD_N"/>
    <property type="match status" value="1"/>
</dbReference>
<gene>
    <name evidence="1" type="primary">lptD</name>
    <name type="synonym">imp</name>
    <name type="synonym">ostA</name>
    <name type="ordered locus">PLES_05921</name>
</gene>
<evidence type="ECO:0000255" key="1">
    <source>
        <dbReference type="HAMAP-Rule" id="MF_01411"/>
    </source>
</evidence>
<evidence type="ECO:0000256" key="2">
    <source>
        <dbReference type="SAM" id="MobiDB-lite"/>
    </source>
</evidence>
<accession>B7V4I1</accession>
<keyword id="KW-0998">Cell outer membrane</keyword>
<keyword id="KW-0472">Membrane</keyword>
<keyword id="KW-0732">Signal</keyword>
<protein>
    <recommendedName>
        <fullName evidence="1">LPS-assembly protein LptD</fullName>
    </recommendedName>
</protein>